<comment type="function">
    <text evidence="1">Adenine nucleotides-binding subunit gamma of AMP-activated protein kinase (AMPK), an energy sensor protein kinase that plays a key role in regulating cellular energy metabolism. In response to reduction of intracellular ATP levels, AMPK activates energy-producing pathways and inhibits energy-consuming processes: inhibits protein, carbohydrate and lipid biosynthesis, as well as cell growth and proliferation. AMPK acts via direct phosphorylation of metabolic enzymes, and by longer-term effects via phosphorylation of transcription regulators. Gamma non-catalytic subunit mediates binding to AMP, ADP and ATP, leading to activate or inhibit AMPK: AMP-binding results in allosteric activation of alpha catalytic subunit (SNF1) both by inducing phosphorylation and preventing dephosphorylation of catalytic subunits.</text>
</comment>
<comment type="subunit">
    <text evidence="1">AMPK is a heterotrimer of an alpha catalytic subunit, a beta and a gamma non-catalytic subunits.</text>
</comment>
<comment type="subcellular location">
    <subcellularLocation>
        <location evidence="1">Nucleus</location>
    </subcellularLocation>
    <subcellularLocation>
        <location evidence="1">Cytoplasm</location>
    </subcellularLocation>
</comment>
<comment type="domain">
    <text evidence="2">The 4 CBS domains mediate binding to nucleotides. Of the 4 potential nucleotide-binding sites, 2 are occupied, designated as sites 2 (or A), and 3 (or B) based on the CBS modules that provide the acidic residue for coordination with the 2'- and 3'-hydroxyl groups of the ribose of AMP. Site 3 can bind either AMP, ADP or ATP (AMP, ADP or ATP 2). Site 2 binds specifically ADP (ADP 1) and is likely to be responsible for protection of a conserved threonine in the activation loop of the alpha catalytic subunit through conformational changes induced by binding of ADP.</text>
</comment>
<comment type="similarity">
    <text evidence="4">Belongs to the 5'-AMP-activated protein kinase gamma subunit family.</text>
</comment>
<protein>
    <recommendedName>
        <fullName>5'-AMP-activated protein kinase subunit gamma</fullName>
        <shortName>AMPK gamma</shortName>
        <shortName>AMPK subunit gamma</shortName>
    </recommendedName>
    <alternativeName>
        <fullName>Nuclear protein SNF4</fullName>
    </alternativeName>
</protein>
<feature type="chain" id="PRO_0000204388" description="5'-AMP-activated protein kinase subunit gamma">
    <location>
        <begin position="1"/>
        <end position="328"/>
    </location>
</feature>
<feature type="domain" description="CBS 1" evidence="3">
    <location>
        <begin position="42"/>
        <end position="103"/>
    </location>
</feature>
<feature type="domain" description="CBS 2" evidence="3">
    <location>
        <begin position="123"/>
        <end position="186"/>
    </location>
</feature>
<feature type="domain" description="CBS 3" evidence="3">
    <location>
        <begin position="199"/>
        <end position="259"/>
    </location>
</feature>
<feature type="domain" description="CBS 4" evidence="3">
    <location>
        <begin position="268"/>
        <end position="328"/>
    </location>
</feature>
<feature type="binding site" evidence="2">
    <location>
        <position position="47"/>
    </location>
    <ligand>
        <name>ADP</name>
        <dbReference type="ChEBI" id="CHEBI:456216"/>
        <label>1</label>
    </ligand>
</feature>
<feature type="binding site" evidence="2">
    <location>
        <position position="150"/>
    </location>
    <ligand>
        <name>ADP</name>
        <dbReference type="ChEBI" id="CHEBI:456216"/>
        <label>2</label>
    </ligand>
</feature>
<feature type="binding site" evidence="2">
    <location>
        <position position="150"/>
    </location>
    <ligand>
        <name>AMP</name>
        <dbReference type="ChEBI" id="CHEBI:456215"/>
    </ligand>
</feature>
<feature type="binding site" evidence="2">
    <location>
        <position position="150"/>
    </location>
    <ligand>
        <name>ATP</name>
        <dbReference type="ChEBI" id="CHEBI:30616"/>
    </ligand>
</feature>
<feature type="binding site" evidence="2">
    <location>
        <position position="151"/>
    </location>
    <ligand>
        <name>ADP</name>
        <dbReference type="ChEBI" id="CHEBI:456216"/>
        <label>1</label>
    </ligand>
</feature>
<feature type="binding site" evidence="2">
    <location>
        <begin position="171"/>
        <end position="174"/>
    </location>
    <ligand>
        <name>ADP</name>
        <dbReference type="ChEBI" id="CHEBI:456216"/>
        <label>1</label>
    </ligand>
</feature>
<feature type="binding site" evidence="2">
    <location>
        <begin position="227"/>
        <end position="228"/>
    </location>
    <ligand>
        <name>ADP</name>
        <dbReference type="ChEBI" id="CHEBI:456216"/>
        <label>2</label>
    </ligand>
</feature>
<feature type="binding site" evidence="2">
    <location>
        <begin position="227"/>
        <end position="228"/>
    </location>
    <ligand>
        <name>AMP</name>
        <dbReference type="ChEBI" id="CHEBI:456215"/>
    </ligand>
</feature>
<feature type="binding site" evidence="2">
    <location>
        <begin position="227"/>
        <end position="228"/>
    </location>
    <ligand>
        <name>ATP</name>
        <dbReference type="ChEBI" id="CHEBI:30616"/>
    </ligand>
</feature>
<feature type="binding site" evidence="2">
    <location>
        <begin position="297"/>
        <end position="299"/>
    </location>
    <ligand>
        <name>ADP</name>
        <dbReference type="ChEBI" id="CHEBI:456216"/>
        <label>1</label>
    </ligand>
</feature>
<feature type="binding site" evidence="2">
    <location>
        <position position="300"/>
    </location>
    <ligand>
        <name>ATP</name>
        <dbReference type="ChEBI" id="CHEBI:30616"/>
    </ligand>
</feature>
<feature type="binding site" evidence="2">
    <location>
        <begin position="313"/>
        <end position="318"/>
    </location>
    <ligand>
        <name>ATP</name>
        <dbReference type="ChEBI" id="CHEBI:30616"/>
    </ligand>
</feature>
<feature type="binding site" evidence="2">
    <location>
        <begin position="315"/>
        <end position="318"/>
    </location>
    <ligand>
        <name>ADP</name>
        <dbReference type="ChEBI" id="CHEBI:456216"/>
        <label>2</label>
    </ligand>
</feature>
<feature type="binding site" evidence="2">
    <location>
        <begin position="315"/>
        <end position="318"/>
    </location>
    <ligand>
        <name>AMP</name>
        <dbReference type="ChEBI" id="CHEBI:456215"/>
    </ligand>
</feature>
<feature type="sequence conflict" description="In Ref. 1; CAB89520." evidence="4" ref="1">
    <original>ND</original>
    <variation>KH</variation>
    <location>
        <begin position="283"/>
        <end position="284"/>
    </location>
</feature>
<keyword id="KW-0067">ATP-binding</keyword>
<keyword id="KW-0119">Carbohydrate metabolism</keyword>
<keyword id="KW-0129">CBS domain</keyword>
<keyword id="KW-0963">Cytoplasm</keyword>
<keyword id="KW-0547">Nucleotide-binding</keyword>
<keyword id="KW-0539">Nucleus</keyword>
<keyword id="KW-1185">Reference proteome</keyword>
<keyword id="KW-0677">Repeat</keyword>
<keyword id="KW-0804">Transcription</keyword>
<keyword id="KW-0805">Transcription regulation</keyword>
<gene>
    <name type="primary">SNF4</name>
    <name type="ordered locus">KLLA0F10769g</name>
</gene>
<dbReference type="EMBL" id="AJ277480">
    <property type="protein sequence ID" value="CAB89520.1"/>
    <property type="molecule type" value="Genomic_DNA"/>
</dbReference>
<dbReference type="EMBL" id="CR382126">
    <property type="protein sequence ID" value="CAG98278.1"/>
    <property type="molecule type" value="Genomic_DNA"/>
</dbReference>
<dbReference type="RefSeq" id="XP_455570.1">
    <property type="nucleotide sequence ID" value="XM_455570.1"/>
</dbReference>
<dbReference type="SMR" id="Q9P869"/>
<dbReference type="FunCoup" id="Q9P869">
    <property type="interactions" value="480"/>
</dbReference>
<dbReference type="STRING" id="284590.Q9P869"/>
<dbReference type="PaxDb" id="284590-Q9P869"/>
<dbReference type="KEGG" id="kla:KLLA0_F10769g"/>
<dbReference type="eggNOG" id="KOG1764">
    <property type="taxonomic scope" value="Eukaryota"/>
</dbReference>
<dbReference type="HOGENOM" id="CLU_021740_1_0_1"/>
<dbReference type="InParanoid" id="Q9P869"/>
<dbReference type="OMA" id="YTCSPDD"/>
<dbReference type="Proteomes" id="UP000000598">
    <property type="component" value="Chromosome F"/>
</dbReference>
<dbReference type="GO" id="GO:0005737">
    <property type="term" value="C:cytoplasm"/>
    <property type="evidence" value="ECO:0007669"/>
    <property type="project" value="UniProtKB-SubCell"/>
</dbReference>
<dbReference type="GO" id="GO:0031588">
    <property type="term" value="C:nucleotide-activated protein kinase complex"/>
    <property type="evidence" value="ECO:0007669"/>
    <property type="project" value="TreeGrafter"/>
</dbReference>
<dbReference type="GO" id="GO:0005634">
    <property type="term" value="C:nucleus"/>
    <property type="evidence" value="ECO:0007669"/>
    <property type="project" value="UniProtKB-SubCell"/>
</dbReference>
<dbReference type="GO" id="GO:0016208">
    <property type="term" value="F:AMP binding"/>
    <property type="evidence" value="ECO:0007669"/>
    <property type="project" value="TreeGrafter"/>
</dbReference>
<dbReference type="GO" id="GO:0005524">
    <property type="term" value="F:ATP binding"/>
    <property type="evidence" value="ECO:0007669"/>
    <property type="project" value="UniProtKB-KW"/>
</dbReference>
<dbReference type="GO" id="GO:0019901">
    <property type="term" value="F:protein kinase binding"/>
    <property type="evidence" value="ECO:0007669"/>
    <property type="project" value="TreeGrafter"/>
</dbReference>
<dbReference type="GO" id="GO:0019887">
    <property type="term" value="F:protein kinase regulator activity"/>
    <property type="evidence" value="ECO:0007669"/>
    <property type="project" value="TreeGrafter"/>
</dbReference>
<dbReference type="CDD" id="cd04618">
    <property type="entry name" value="CBS_euAMPK_gamma-like_repeat1"/>
    <property type="match status" value="1"/>
</dbReference>
<dbReference type="CDD" id="cd04641">
    <property type="entry name" value="CBS_euAMPK_gamma-like_repeat2"/>
    <property type="match status" value="1"/>
</dbReference>
<dbReference type="FunFam" id="3.10.580.10:FF:000033">
    <property type="entry name" value="Nuclear protein SNF4"/>
    <property type="match status" value="1"/>
</dbReference>
<dbReference type="Gene3D" id="3.10.580.10">
    <property type="entry name" value="CBS-domain"/>
    <property type="match status" value="2"/>
</dbReference>
<dbReference type="InterPro" id="IPR050511">
    <property type="entry name" value="AMPK_gamma/SDS23_families"/>
</dbReference>
<dbReference type="InterPro" id="IPR000644">
    <property type="entry name" value="CBS_dom"/>
</dbReference>
<dbReference type="InterPro" id="IPR046342">
    <property type="entry name" value="CBS_dom_sf"/>
</dbReference>
<dbReference type="PANTHER" id="PTHR13780">
    <property type="entry name" value="AMP-ACTIVATED PROTEIN KINASE, GAMMA REGULATORY SUBUNIT"/>
    <property type="match status" value="1"/>
</dbReference>
<dbReference type="PANTHER" id="PTHR13780:SF35">
    <property type="entry name" value="LD22662P"/>
    <property type="match status" value="1"/>
</dbReference>
<dbReference type="Pfam" id="PF00571">
    <property type="entry name" value="CBS"/>
    <property type="match status" value="2"/>
</dbReference>
<dbReference type="SMART" id="SM00116">
    <property type="entry name" value="CBS"/>
    <property type="match status" value="4"/>
</dbReference>
<dbReference type="SUPFAM" id="SSF54631">
    <property type="entry name" value="CBS-domain pair"/>
    <property type="match status" value="2"/>
</dbReference>
<dbReference type="PROSITE" id="PS51371">
    <property type="entry name" value="CBS"/>
    <property type="match status" value="4"/>
</dbReference>
<accession>Q9P869</accession>
<accession>Q6CKG9</accession>
<name>AAKG_KLULA</name>
<evidence type="ECO:0000250" key="1">
    <source>
        <dbReference type="UniProtKB" id="P12904"/>
    </source>
</evidence>
<evidence type="ECO:0000250" key="2">
    <source>
        <dbReference type="UniProtKB" id="Q10343"/>
    </source>
</evidence>
<evidence type="ECO:0000255" key="3">
    <source>
        <dbReference type="PROSITE-ProRule" id="PRU00703"/>
    </source>
</evidence>
<evidence type="ECO:0000305" key="4"/>
<reference key="1">
    <citation type="submission" date="2000-04" db="EMBL/GenBank/DDBJ databases">
        <title>Molecular characterization of KlSNF4 gene.</title>
        <authorList>
            <person name="Tomasini L."/>
            <person name="Ferrero I."/>
            <person name="Goffrini P."/>
        </authorList>
    </citation>
    <scope>NUCLEOTIDE SEQUENCE [GENOMIC DNA]</scope>
</reference>
<reference key="2">
    <citation type="journal article" date="2004" name="Nature">
        <title>Genome evolution in yeasts.</title>
        <authorList>
            <person name="Dujon B."/>
            <person name="Sherman D."/>
            <person name="Fischer G."/>
            <person name="Durrens P."/>
            <person name="Casaregola S."/>
            <person name="Lafontaine I."/>
            <person name="de Montigny J."/>
            <person name="Marck C."/>
            <person name="Neuveglise C."/>
            <person name="Talla E."/>
            <person name="Goffard N."/>
            <person name="Frangeul L."/>
            <person name="Aigle M."/>
            <person name="Anthouard V."/>
            <person name="Babour A."/>
            <person name="Barbe V."/>
            <person name="Barnay S."/>
            <person name="Blanchin S."/>
            <person name="Beckerich J.-M."/>
            <person name="Beyne E."/>
            <person name="Bleykasten C."/>
            <person name="Boisrame A."/>
            <person name="Boyer J."/>
            <person name="Cattolico L."/>
            <person name="Confanioleri F."/>
            <person name="de Daruvar A."/>
            <person name="Despons L."/>
            <person name="Fabre E."/>
            <person name="Fairhead C."/>
            <person name="Ferry-Dumazet H."/>
            <person name="Groppi A."/>
            <person name="Hantraye F."/>
            <person name="Hennequin C."/>
            <person name="Jauniaux N."/>
            <person name="Joyet P."/>
            <person name="Kachouri R."/>
            <person name="Kerrest A."/>
            <person name="Koszul R."/>
            <person name="Lemaire M."/>
            <person name="Lesur I."/>
            <person name="Ma L."/>
            <person name="Muller H."/>
            <person name="Nicaud J.-M."/>
            <person name="Nikolski M."/>
            <person name="Oztas S."/>
            <person name="Ozier-Kalogeropoulos O."/>
            <person name="Pellenz S."/>
            <person name="Potier S."/>
            <person name="Richard G.-F."/>
            <person name="Straub M.-L."/>
            <person name="Suleau A."/>
            <person name="Swennen D."/>
            <person name="Tekaia F."/>
            <person name="Wesolowski-Louvel M."/>
            <person name="Westhof E."/>
            <person name="Wirth B."/>
            <person name="Zeniou-Meyer M."/>
            <person name="Zivanovic Y."/>
            <person name="Bolotin-Fukuhara M."/>
            <person name="Thierry A."/>
            <person name="Bouchier C."/>
            <person name="Caudron B."/>
            <person name="Scarpelli C."/>
            <person name="Gaillardin C."/>
            <person name="Weissenbach J."/>
            <person name="Wincker P."/>
            <person name="Souciet J.-L."/>
        </authorList>
    </citation>
    <scope>NUCLEOTIDE SEQUENCE [LARGE SCALE GENOMIC DNA]</scope>
    <source>
        <strain>ATCC 8585 / CBS 2359 / DSM 70799 / NBRC 1267 / NRRL Y-1140 / WM37</strain>
    </source>
</reference>
<organism>
    <name type="scientific">Kluyveromyces lactis (strain ATCC 8585 / CBS 2359 / DSM 70799 / NBRC 1267 / NRRL Y-1140 / WM37)</name>
    <name type="common">Yeast</name>
    <name type="synonym">Candida sphaerica</name>
    <dbReference type="NCBI Taxonomy" id="284590"/>
    <lineage>
        <taxon>Eukaryota</taxon>
        <taxon>Fungi</taxon>
        <taxon>Dikarya</taxon>
        <taxon>Ascomycota</taxon>
        <taxon>Saccharomycotina</taxon>
        <taxon>Saccharomycetes</taxon>
        <taxon>Saccharomycetales</taxon>
        <taxon>Saccharomycetaceae</taxon>
        <taxon>Kluyveromyces</taxon>
    </lineage>
</organism>
<sequence length="328" mass="37127">MPASSDKLQPKDQQTIELEQKLAVQSIRVFLQSKTSYDVLPVSYRLIVLDTSLLVKKSLNILLQNNVVSAPLWDAQTSKFAGLLTSSDFINVIQYYFHNPDKFELVDKLQLNGLKDIERAIGIQPYDTRSIHPFRPLYEACVKMIESRSRRIPLIDQDEETQREIVVSVLTQYRILKFVALNCKEIRYLKRPLRELDIISTNNIMSCQMSTPVIDVIQLLTLAGGVSSVPIVDEQGKLVNVYEAVDVLGLIKGGIYNDLSLSVGEALMRRSDDFEGVFTCTENDKLSSILDTVRKSRVHRFFVVDSNGFLTGVLTLSDILKYILFAES</sequence>
<proteinExistence type="inferred from homology"/>